<proteinExistence type="inferred from homology"/>
<organism>
    <name type="scientific">Nitrosomonas europaea (strain ATCC 19718 / CIP 103999 / KCTC 2705 / NBRC 14298)</name>
    <dbReference type="NCBI Taxonomy" id="228410"/>
    <lineage>
        <taxon>Bacteria</taxon>
        <taxon>Pseudomonadati</taxon>
        <taxon>Pseudomonadota</taxon>
        <taxon>Betaproteobacteria</taxon>
        <taxon>Nitrosomonadales</taxon>
        <taxon>Nitrosomonadaceae</taxon>
        <taxon>Nitrosomonas</taxon>
    </lineage>
</organism>
<comment type="function">
    <text evidence="1">Catalyzes the attachment of isoleucine to tRNA(Ile). As IleRS can inadvertently accommodate and process structurally similar amino acids such as valine, to avoid such errors it has two additional distinct tRNA(Ile)-dependent editing activities. One activity is designated as 'pretransfer' editing and involves the hydrolysis of activated Val-AMP. The other activity is designated 'posttransfer' editing and involves deacylation of mischarged Val-tRNA(Ile).</text>
</comment>
<comment type="catalytic activity">
    <reaction evidence="1">
        <text>tRNA(Ile) + L-isoleucine + ATP = L-isoleucyl-tRNA(Ile) + AMP + diphosphate</text>
        <dbReference type="Rhea" id="RHEA:11060"/>
        <dbReference type="Rhea" id="RHEA-COMP:9666"/>
        <dbReference type="Rhea" id="RHEA-COMP:9695"/>
        <dbReference type="ChEBI" id="CHEBI:30616"/>
        <dbReference type="ChEBI" id="CHEBI:33019"/>
        <dbReference type="ChEBI" id="CHEBI:58045"/>
        <dbReference type="ChEBI" id="CHEBI:78442"/>
        <dbReference type="ChEBI" id="CHEBI:78528"/>
        <dbReference type="ChEBI" id="CHEBI:456215"/>
        <dbReference type="EC" id="6.1.1.5"/>
    </reaction>
</comment>
<comment type="cofactor">
    <cofactor evidence="1">
        <name>Zn(2+)</name>
        <dbReference type="ChEBI" id="CHEBI:29105"/>
    </cofactor>
    <text evidence="1">Binds 1 zinc ion per subunit.</text>
</comment>
<comment type="subunit">
    <text evidence="1">Monomer.</text>
</comment>
<comment type="subcellular location">
    <subcellularLocation>
        <location evidence="1">Cytoplasm</location>
    </subcellularLocation>
</comment>
<comment type="domain">
    <text evidence="1">IleRS has two distinct active sites: one for aminoacylation and one for editing. The misactivated valine is translocated from the active site to the editing site, which sterically excludes the correctly activated isoleucine. The single editing site contains two valyl binding pockets, one specific for each substrate (Val-AMP or Val-tRNA(Ile)).</text>
</comment>
<comment type="similarity">
    <text evidence="1">Belongs to the class-I aminoacyl-tRNA synthetase family. IleS type 1 subfamily.</text>
</comment>
<protein>
    <recommendedName>
        <fullName evidence="1">Isoleucine--tRNA ligase</fullName>
        <ecNumber evidence="1">6.1.1.5</ecNumber>
    </recommendedName>
    <alternativeName>
        <fullName evidence="1">Isoleucyl-tRNA synthetase</fullName>
        <shortName evidence="1">IleRS</shortName>
    </alternativeName>
</protein>
<dbReference type="EC" id="6.1.1.5" evidence="1"/>
<dbReference type="EMBL" id="AL954747">
    <property type="protein sequence ID" value="CAD85060.1"/>
    <property type="molecule type" value="Genomic_DNA"/>
</dbReference>
<dbReference type="RefSeq" id="WP_011111740.1">
    <property type="nucleotide sequence ID" value="NC_004757.1"/>
</dbReference>
<dbReference type="SMR" id="Q820M6"/>
<dbReference type="STRING" id="228410.NE1149"/>
<dbReference type="GeneID" id="87104326"/>
<dbReference type="KEGG" id="neu:NE1149"/>
<dbReference type="eggNOG" id="COG0060">
    <property type="taxonomic scope" value="Bacteria"/>
</dbReference>
<dbReference type="HOGENOM" id="CLU_001493_7_0_4"/>
<dbReference type="OrthoDB" id="9810365at2"/>
<dbReference type="PhylomeDB" id="Q820M6"/>
<dbReference type="Proteomes" id="UP000001416">
    <property type="component" value="Chromosome"/>
</dbReference>
<dbReference type="GO" id="GO:0005829">
    <property type="term" value="C:cytosol"/>
    <property type="evidence" value="ECO:0007669"/>
    <property type="project" value="TreeGrafter"/>
</dbReference>
<dbReference type="GO" id="GO:0002161">
    <property type="term" value="F:aminoacyl-tRNA deacylase activity"/>
    <property type="evidence" value="ECO:0007669"/>
    <property type="project" value="InterPro"/>
</dbReference>
<dbReference type="GO" id="GO:0005524">
    <property type="term" value="F:ATP binding"/>
    <property type="evidence" value="ECO:0007669"/>
    <property type="project" value="UniProtKB-UniRule"/>
</dbReference>
<dbReference type="GO" id="GO:0004822">
    <property type="term" value="F:isoleucine-tRNA ligase activity"/>
    <property type="evidence" value="ECO:0007669"/>
    <property type="project" value="UniProtKB-UniRule"/>
</dbReference>
<dbReference type="GO" id="GO:0000049">
    <property type="term" value="F:tRNA binding"/>
    <property type="evidence" value="ECO:0007669"/>
    <property type="project" value="InterPro"/>
</dbReference>
<dbReference type="GO" id="GO:0008270">
    <property type="term" value="F:zinc ion binding"/>
    <property type="evidence" value="ECO:0007669"/>
    <property type="project" value="UniProtKB-UniRule"/>
</dbReference>
<dbReference type="GO" id="GO:0006428">
    <property type="term" value="P:isoleucyl-tRNA aminoacylation"/>
    <property type="evidence" value="ECO:0007669"/>
    <property type="project" value="UniProtKB-UniRule"/>
</dbReference>
<dbReference type="CDD" id="cd07960">
    <property type="entry name" value="Anticodon_Ia_Ile_BEm"/>
    <property type="match status" value="1"/>
</dbReference>
<dbReference type="FunFam" id="1.10.730.20:FF:000001">
    <property type="entry name" value="Isoleucine--tRNA ligase"/>
    <property type="match status" value="1"/>
</dbReference>
<dbReference type="FunFam" id="3.40.50.620:FF:000042">
    <property type="entry name" value="Isoleucine--tRNA ligase"/>
    <property type="match status" value="1"/>
</dbReference>
<dbReference type="FunFam" id="3.40.50.620:FF:000048">
    <property type="entry name" value="Isoleucine--tRNA ligase"/>
    <property type="match status" value="1"/>
</dbReference>
<dbReference type="Gene3D" id="1.10.730.20">
    <property type="match status" value="1"/>
</dbReference>
<dbReference type="Gene3D" id="3.40.50.620">
    <property type="entry name" value="HUPs"/>
    <property type="match status" value="2"/>
</dbReference>
<dbReference type="Gene3D" id="1.10.10.830">
    <property type="entry name" value="Ile-tRNA synthetase CP2 domain-like"/>
    <property type="match status" value="1"/>
</dbReference>
<dbReference type="Gene3D" id="3.90.740.10">
    <property type="entry name" value="Valyl/Leucyl/Isoleucyl-tRNA synthetase, editing domain"/>
    <property type="match status" value="1"/>
</dbReference>
<dbReference type="HAMAP" id="MF_02002">
    <property type="entry name" value="Ile_tRNA_synth_type1"/>
    <property type="match status" value="1"/>
</dbReference>
<dbReference type="InterPro" id="IPR001412">
    <property type="entry name" value="aa-tRNA-synth_I_CS"/>
</dbReference>
<dbReference type="InterPro" id="IPR002300">
    <property type="entry name" value="aa-tRNA-synth_Ia"/>
</dbReference>
<dbReference type="InterPro" id="IPR033708">
    <property type="entry name" value="Anticodon_Ile_BEm"/>
</dbReference>
<dbReference type="InterPro" id="IPR002301">
    <property type="entry name" value="Ile-tRNA-ligase"/>
</dbReference>
<dbReference type="InterPro" id="IPR023585">
    <property type="entry name" value="Ile-tRNA-ligase_type1"/>
</dbReference>
<dbReference type="InterPro" id="IPR050081">
    <property type="entry name" value="Ile-tRNA_ligase"/>
</dbReference>
<dbReference type="InterPro" id="IPR013155">
    <property type="entry name" value="M/V/L/I-tRNA-synth_anticd-bd"/>
</dbReference>
<dbReference type="InterPro" id="IPR014729">
    <property type="entry name" value="Rossmann-like_a/b/a_fold"/>
</dbReference>
<dbReference type="InterPro" id="IPR009080">
    <property type="entry name" value="tRNAsynth_Ia_anticodon-bd"/>
</dbReference>
<dbReference type="InterPro" id="IPR009008">
    <property type="entry name" value="Val/Leu/Ile-tRNA-synth_edit"/>
</dbReference>
<dbReference type="InterPro" id="IPR010663">
    <property type="entry name" value="Znf_FPG/IleRS"/>
</dbReference>
<dbReference type="NCBIfam" id="TIGR00392">
    <property type="entry name" value="ileS"/>
    <property type="match status" value="1"/>
</dbReference>
<dbReference type="PANTHER" id="PTHR42765:SF1">
    <property type="entry name" value="ISOLEUCINE--TRNA LIGASE, MITOCHONDRIAL"/>
    <property type="match status" value="1"/>
</dbReference>
<dbReference type="PANTHER" id="PTHR42765">
    <property type="entry name" value="SOLEUCYL-TRNA SYNTHETASE"/>
    <property type="match status" value="1"/>
</dbReference>
<dbReference type="Pfam" id="PF08264">
    <property type="entry name" value="Anticodon_1"/>
    <property type="match status" value="1"/>
</dbReference>
<dbReference type="Pfam" id="PF00133">
    <property type="entry name" value="tRNA-synt_1"/>
    <property type="match status" value="1"/>
</dbReference>
<dbReference type="Pfam" id="PF06827">
    <property type="entry name" value="zf-FPG_IleRS"/>
    <property type="match status" value="1"/>
</dbReference>
<dbReference type="PRINTS" id="PR00984">
    <property type="entry name" value="TRNASYNTHILE"/>
</dbReference>
<dbReference type="SUPFAM" id="SSF47323">
    <property type="entry name" value="Anticodon-binding domain of a subclass of class I aminoacyl-tRNA synthetases"/>
    <property type="match status" value="1"/>
</dbReference>
<dbReference type="SUPFAM" id="SSF52374">
    <property type="entry name" value="Nucleotidylyl transferase"/>
    <property type="match status" value="1"/>
</dbReference>
<dbReference type="SUPFAM" id="SSF50677">
    <property type="entry name" value="ValRS/IleRS/LeuRS editing domain"/>
    <property type="match status" value="1"/>
</dbReference>
<dbReference type="PROSITE" id="PS00178">
    <property type="entry name" value="AA_TRNA_LIGASE_I"/>
    <property type="match status" value="1"/>
</dbReference>
<evidence type="ECO:0000255" key="1">
    <source>
        <dbReference type="HAMAP-Rule" id="MF_02002"/>
    </source>
</evidence>
<feature type="chain" id="PRO_0000098431" description="Isoleucine--tRNA ligase">
    <location>
        <begin position="1"/>
        <end position="939"/>
    </location>
</feature>
<feature type="short sequence motif" description="'HIGH' region">
    <location>
        <begin position="59"/>
        <end position="69"/>
    </location>
</feature>
<feature type="short sequence motif" description="'KMSKS' region">
    <location>
        <begin position="611"/>
        <end position="615"/>
    </location>
</feature>
<feature type="binding site" evidence="1">
    <location>
        <position position="570"/>
    </location>
    <ligand>
        <name>L-isoleucyl-5'-AMP</name>
        <dbReference type="ChEBI" id="CHEBI:178002"/>
    </ligand>
</feature>
<feature type="binding site" evidence="1">
    <location>
        <position position="614"/>
    </location>
    <ligand>
        <name>ATP</name>
        <dbReference type="ChEBI" id="CHEBI:30616"/>
    </ligand>
</feature>
<feature type="binding site" evidence="1">
    <location>
        <position position="902"/>
    </location>
    <ligand>
        <name>Zn(2+)</name>
        <dbReference type="ChEBI" id="CHEBI:29105"/>
    </ligand>
</feature>
<feature type="binding site" evidence="1">
    <location>
        <position position="905"/>
    </location>
    <ligand>
        <name>Zn(2+)</name>
        <dbReference type="ChEBI" id="CHEBI:29105"/>
    </ligand>
</feature>
<feature type="binding site" evidence="1">
    <location>
        <position position="922"/>
    </location>
    <ligand>
        <name>Zn(2+)</name>
        <dbReference type="ChEBI" id="CHEBI:29105"/>
    </ligand>
</feature>
<feature type="binding site" evidence="1">
    <location>
        <position position="925"/>
    </location>
    <ligand>
        <name>Zn(2+)</name>
        <dbReference type="ChEBI" id="CHEBI:29105"/>
    </ligand>
</feature>
<keyword id="KW-0030">Aminoacyl-tRNA synthetase</keyword>
<keyword id="KW-0067">ATP-binding</keyword>
<keyword id="KW-0963">Cytoplasm</keyword>
<keyword id="KW-0436">Ligase</keyword>
<keyword id="KW-0479">Metal-binding</keyword>
<keyword id="KW-0547">Nucleotide-binding</keyword>
<keyword id="KW-0648">Protein biosynthesis</keyword>
<keyword id="KW-1185">Reference proteome</keyword>
<keyword id="KW-0862">Zinc</keyword>
<reference key="1">
    <citation type="journal article" date="2003" name="J. Bacteriol.">
        <title>Complete genome sequence of the ammonia-oxidizing bacterium and obligate chemolithoautotroph Nitrosomonas europaea.</title>
        <authorList>
            <person name="Chain P."/>
            <person name="Lamerdin J.E."/>
            <person name="Larimer F.W."/>
            <person name="Regala W."/>
            <person name="Lao V."/>
            <person name="Land M.L."/>
            <person name="Hauser L."/>
            <person name="Hooper A.B."/>
            <person name="Klotz M.G."/>
            <person name="Norton J."/>
            <person name="Sayavedra-Soto L.A."/>
            <person name="Arciero D.M."/>
            <person name="Hommes N.G."/>
            <person name="Whittaker M.M."/>
            <person name="Arp D.J."/>
        </authorList>
    </citation>
    <scope>NUCLEOTIDE SEQUENCE [LARGE SCALE GENOMIC DNA]</scope>
    <source>
        <strain>ATCC 19718 / CIP 103999 / KCTC 2705 / NBRC 14298</strain>
    </source>
</reference>
<gene>
    <name evidence="1" type="primary">ileS</name>
    <name type="ordered locus">NE1149</name>
</gene>
<accession>Q820M6</accession>
<name>SYI_NITEU</name>
<sequence>MTIDYKKTLNLLDTSFPMRGDLARREPAMLKAWQERNLYRKIRAISQGRPKFILHDGPPYANGDIHIGHAVNKILKDIIIKSKTLSGFDAPYVPGWDCHGLPIEHQIEKKYGKHLPADQVRKLCRAFAQEQIDRQKADFMRLGVLGDWEHPYLTMNYAIEAGIIRALGKIFRNGHLYQGQKPVNWCIDCGSALAEAEVEYENKRSPAIDVGFEIIGRKDVCHPLAGVMAAEIPAGTRIFAVIWTTTPWTLPANQAVCVHPEFDYSLVSTSRGWLLLASELTNACLARYQLEGRVVATCKGLALEGLSLQHPFADRIVKVICGRHVTLEAGTGLVHTAPAHGLDDYFIGQQYGLPSDSPVKGDGKFSEQISLVGGMFVWKANDVVIDTLRSSGHLLHAEEIEHSYPHCWRHKTPIIFRATPQWFIGMQRQTAESQSFGESLRDLALRAVELTRFYPAWGRARLEAMIGNRPDWCISRQRNWGVPMTFFIHKEAHTLHPRTPELLEKVAGLVEQQGIEAWFSLDATELLGEEAQHYQKLTDTLDVWFDSGTTHETVLKQNIQLRHPADLYLEGSDQHRGWFQSSLLTGCAIDGCAPYTALLTHGFVVDGQGYKMSKSKGNVIAPQKIADTLGADILRLWVASTDYSGELSISDEILKRTVETYRRIRNTLRFLLANLADFNLAADALPPAEWVEIDRYMLAYTAALQNDLLGFYERYEFHQAVARLHHFCSEDLGGFYLDILKDRLYTSMANGIPRRSAQNALYHIVHSLVRLFAPVLSFTAEEVWQELGESAEDSVFLHTWHCFPDQSEILSDAQILIPRWQRLRELRARVLKQLEDARIQGEIGSSLAAIVEIHAAGEDFALLDSLGDDLRFVLITSEVHLQRVDDAAGEVIRVTASPHMKCERCWHYRQDVGSVPEHSSLCSRCVSNLAGSGEYRRFA</sequence>